<proteinExistence type="inferred from homology"/>
<sequence>MTQSNPNEQNVELNRTSLYWGLLLIFVLAVLFSNYFFN</sequence>
<keyword id="KW-0150">Chloroplast</keyword>
<keyword id="KW-0472">Membrane</keyword>
<keyword id="KW-0602">Photosynthesis</keyword>
<keyword id="KW-0604">Photosystem II</keyword>
<keyword id="KW-0934">Plastid</keyword>
<keyword id="KW-0674">Reaction center</keyword>
<keyword id="KW-0793">Thylakoid</keyword>
<keyword id="KW-0812">Transmembrane</keyword>
<keyword id="KW-1133">Transmembrane helix</keyword>
<dbReference type="EMBL" id="AP009373">
    <property type="protein sequence ID" value="BAF50389.1"/>
    <property type="molecule type" value="Genomic_DNA"/>
</dbReference>
<dbReference type="RefSeq" id="YP_001123565.1">
    <property type="nucleotide sequence ID" value="NC_009272.1"/>
</dbReference>
<dbReference type="SMR" id="A4QL34"/>
<dbReference type="GeneID" id="4964726"/>
<dbReference type="GO" id="GO:0009535">
    <property type="term" value="C:chloroplast thylakoid membrane"/>
    <property type="evidence" value="ECO:0007669"/>
    <property type="project" value="UniProtKB-SubCell"/>
</dbReference>
<dbReference type="GO" id="GO:0009539">
    <property type="term" value="C:photosystem II reaction center"/>
    <property type="evidence" value="ECO:0007669"/>
    <property type="project" value="InterPro"/>
</dbReference>
<dbReference type="GO" id="GO:0015979">
    <property type="term" value="P:photosynthesis"/>
    <property type="evidence" value="ECO:0007669"/>
    <property type="project" value="UniProtKB-UniRule"/>
</dbReference>
<dbReference type="HAMAP" id="MF_01317">
    <property type="entry name" value="PSII_PsbL"/>
    <property type="match status" value="1"/>
</dbReference>
<dbReference type="InterPro" id="IPR003372">
    <property type="entry name" value="PSII_PsbL"/>
</dbReference>
<dbReference type="InterPro" id="IPR037266">
    <property type="entry name" value="PSII_PsbL_sf"/>
</dbReference>
<dbReference type="NCBIfam" id="NF001972">
    <property type="entry name" value="PRK00753.1"/>
    <property type="match status" value="1"/>
</dbReference>
<dbReference type="Pfam" id="PF02419">
    <property type="entry name" value="PsbL"/>
    <property type="match status" value="1"/>
</dbReference>
<dbReference type="SUPFAM" id="SSF161017">
    <property type="entry name" value="Photosystem II reaction center protein L, PsbL"/>
    <property type="match status" value="1"/>
</dbReference>
<reference key="1">
    <citation type="submission" date="2007-03" db="EMBL/GenBank/DDBJ databases">
        <title>Sequencing analysis of Draba nemoroza chloroplast DNA.</title>
        <authorList>
            <person name="Hosouchi T."/>
            <person name="Tsuruoka H."/>
            <person name="Kotani H."/>
        </authorList>
    </citation>
    <scope>NUCLEOTIDE SEQUENCE [LARGE SCALE GENOMIC DNA]</scope>
</reference>
<geneLocation type="chloroplast"/>
<gene>
    <name evidence="1" type="primary">psbL</name>
</gene>
<organism>
    <name type="scientific">Draba nemorosa</name>
    <name type="common">Woodland whitlowgrass</name>
    <dbReference type="NCBI Taxonomy" id="171822"/>
    <lineage>
        <taxon>Eukaryota</taxon>
        <taxon>Viridiplantae</taxon>
        <taxon>Streptophyta</taxon>
        <taxon>Embryophyta</taxon>
        <taxon>Tracheophyta</taxon>
        <taxon>Spermatophyta</taxon>
        <taxon>Magnoliopsida</taxon>
        <taxon>eudicotyledons</taxon>
        <taxon>Gunneridae</taxon>
        <taxon>Pentapetalae</taxon>
        <taxon>rosids</taxon>
        <taxon>malvids</taxon>
        <taxon>Brassicales</taxon>
        <taxon>Brassicaceae</taxon>
        <taxon>Arabideae</taxon>
        <taxon>Draba</taxon>
    </lineage>
</organism>
<feature type="chain" id="PRO_0000306233" description="Photosystem II reaction center protein L">
    <location>
        <begin position="1"/>
        <end position="38"/>
    </location>
</feature>
<feature type="transmembrane region" description="Helical" evidence="1">
    <location>
        <begin position="17"/>
        <end position="37"/>
    </location>
</feature>
<evidence type="ECO:0000255" key="1">
    <source>
        <dbReference type="HAMAP-Rule" id="MF_01317"/>
    </source>
</evidence>
<accession>A4QL34</accession>
<protein>
    <recommendedName>
        <fullName evidence="1">Photosystem II reaction center protein L</fullName>
        <shortName evidence="1">PSII-L</shortName>
    </recommendedName>
</protein>
<comment type="function">
    <text evidence="1">One of the components of the core complex of photosystem II (PSII). PSII is a light-driven water:plastoquinone oxidoreductase that uses light energy to abstract electrons from H(2)O, generating O(2) and a proton gradient subsequently used for ATP formation. It consists of a core antenna complex that captures photons, and an electron transfer chain that converts photonic excitation into a charge separation. This subunit is found at the monomer-monomer interface and is required for correct PSII assembly and/or dimerization.</text>
</comment>
<comment type="subunit">
    <text evidence="1">PSII is composed of 1 copy each of membrane proteins PsbA, PsbB, PsbC, PsbD, PsbE, PsbF, PsbH, PsbI, PsbJ, PsbK, PsbL, PsbM, PsbT, PsbX, PsbY, PsbZ, Psb30/Ycf12, at least 3 peripheral proteins of the oxygen-evolving complex and a large number of cofactors. It forms dimeric complexes.</text>
</comment>
<comment type="subcellular location">
    <subcellularLocation>
        <location evidence="1">Plastid</location>
        <location evidence="1">Chloroplast thylakoid membrane</location>
        <topology evidence="1">Single-pass membrane protein</topology>
    </subcellularLocation>
</comment>
<comment type="similarity">
    <text evidence="1">Belongs to the PsbL family.</text>
</comment>
<name>PSBL_DRANE</name>